<gene>
    <name evidence="1" type="primary">plsX</name>
    <name type="ordered locus">MYPE3640</name>
</gene>
<organism>
    <name type="scientific">Malacoplasma penetrans (strain HF-2)</name>
    <name type="common">Mycoplasma penetrans</name>
    <dbReference type="NCBI Taxonomy" id="272633"/>
    <lineage>
        <taxon>Bacteria</taxon>
        <taxon>Bacillati</taxon>
        <taxon>Mycoplasmatota</taxon>
        <taxon>Mycoplasmoidales</taxon>
        <taxon>Mycoplasmoidaceae</taxon>
        <taxon>Malacoplasma</taxon>
    </lineage>
</organism>
<keyword id="KW-0963">Cytoplasm</keyword>
<keyword id="KW-0444">Lipid biosynthesis</keyword>
<keyword id="KW-0443">Lipid metabolism</keyword>
<keyword id="KW-0594">Phospholipid biosynthesis</keyword>
<keyword id="KW-1208">Phospholipid metabolism</keyword>
<keyword id="KW-1185">Reference proteome</keyword>
<keyword id="KW-0808">Transferase</keyword>
<proteinExistence type="inferred from homology"/>
<sequence>MIFSVDVMGFENDIREAINACRDFCKKNSDVKIILVGDKERIQKEIKSSDNFEIVHASEEIKMTDDPISIRKKTNSSMYKAIELVKENKADGVLSAGNTSCYVFLTFLILGKIPGITKCGFMPYMPTINGRGVNFLDVGANKECDATDLVNFARMGSIYIEKVRNVKNPKVGILNIGTEDNKGLSYHIEANKILKDVKNINYVGFVESRYLLEEKVDLIVSDGFVGNIALKALEGTFKTVLRSLLGTRKKPLFGWLWFLLSIPNLLTIKNKYDYKNNAGAIVLGLNKIAIKTHGSADYKQFYSSLRLLRDTVKADLINILKREFEKDNEGQ</sequence>
<dbReference type="EC" id="2.3.1.274" evidence="1"/>
<dbReference type="EMBL" id="BA000026">
    <property type="protein sequence ID" value="BAC44155.1"/>
    <property type="molecule type" value="Genomic_DNA"/>
</dbReference>
<dbReference type="RefSeq" id="WP_011077191.1">
    <property type="nucleotide sequence ID" value="NC_004432.1"/>
</dbReference>
<dbReference type="SMR" id="Q8EW41"/>
<dbReference type="FunCoup" id="Q8EW41">
    <property type="interactions" value="128"/>
</dbReference>
<dbReference type="STRING" id="272633.gene:10731476"/>
<dbReference type="KEGG" id="mpe:MYPE3640"/>
<dbReference type="eggNOG" id="COG0416">
    <property type="taxonomic scope" value="Bacteria"/>
</dbReference>
<dbReference type="HOGENOM" id="CLU_039379_1_1_14"/>
<dbReference type="InParanoid" id="Q8EW41"/>
<dbReference type="UniPathway" id="UPA00085"/>
<dbReference type="Proteomes" id="UP000002522">
    <property type="component" value="Chromosome"/>
</dbReference>
<dbReference type="GO" id="GO:0005737">
    <property type="term" value="C:cytoplasm"/>
    <property type="evidence" value="ECO:0007669"/>
    <property type="project" value="UniProtKB-SubCell"/>
</dbReference>
<dbReference type="GO" id="GO:0043811">
    <property type="term" value="F:phosphate:acyl-[acyl carrier protein] acyltransferase activity"/>
    <property type="evidence" value="ECO:0007669"/>
    <property type="project" value="UniProtKB-UniRule"/>
</dbReference>
<dbReference type="GO" id="GO:0006633">
    <property type="term" value="P:fatty acid biosynthetic process"/>
    <property type="evidence" value="ECO:0007669"/>
    <property type="project" value="UniProtKB-UniRule"/>
</dbReference>
<dbReference type="GO" id="GO:0008654">
    <property type="term" value="P:phospholipid biosynthetic process"/>
    <property type="evidence" value="ECO:0007669"/>
    <property type="project" value="UniProtKB-KW"/>
</dbReference>
<dbReference type="Gene3D" id="3.40.718.10">
    <property type="entry name" value="Isopropylmalate Dehydrogenase"/>
    <property type="match status" value="1"/>
</dbReference>
<dbReference type="HAMAP" id="MF_00019">
    <property type="entry name" value="PlsX"/>
    <property type="match status" value="1"/>
</dbReference>
<dbReference type="InterPro" id="IPR003664">
    <property type="entry name" value="FA_synthesis"/>
</dbReference>
<dbReference type="InterPro" id="IPR012281">
    <property type="entry name" value="Phospholipid_synth_PlsX-like"/>
</dbReference>
<dbReference type="NCBIfam" id="TIGR00182">
    <property type="entry name" value="plsX"/>
    <property type="match status" value="1"/>
</dbReference>
<dbReference type="PANTHER" id="PTHR30100">
    <property type="entry name" value="FATTY ACID/PHOSPHOLIPID SYNTHESIS PROTEIN PLSX"/>
    <property type="match status" value="1"/>
</dbReference>
<dbReference type="PANTHER" id="PTHR30100:SF1">
    <property type="entry name" value="PHOSPHATE ACYLTRANSFERASE"/>
    <property type="match status" value="1"/>
</dbReference>
<dbReference type="Pfam" id="PF02504">
    <property type="entry name" value="FA_synthesis"/>
    <property type="match status" value="1"/>
</dbReference>
<dbReference type="PIRSF" id="PIRSF002465">
    <property type="entry name" value="Phsphlp_syn_PlsX"/>
    <property type="match status" value="1"/>
</dbReference>
<dbReference type="SUPFAM" id="SSF53659">
    <property type="entry name" value="Isocitrate/Isopropylmalate dehydrogenase-like"/>
    <property type="match status" value="1"/>
</dbReference>
<accession>Q8EW41</accession>
<feature type="chain" id="PRO_0000189908" description="Phosphate acyltransferase">
    <location>
        <begin position="1"/>
        <end position="331"/>
    </location>
</feature>
<evidence type="ECO:0000255" key="1">
    <source>
        <dbReference type="HAMAP-Rule" id="MF_00019"/>
    </source>
</evidence>
<comment type="function">
    <text evidence="1">Catalyzes the reversible formation of acyl-phosphate (acyl-PO(4)) from acyl-[acyl-carrier-protein] (acyl-ACP). This enzyme utilizes acyl-ACP as fatty acyl donor, but not acyl-CoA.</text>
</comment>
<comment type="catalytic activity">
    <reaction evidence="1">
        <text>a fatty acyl-[ACP] + phosphate = an acyl phosphate + holo-[ACP]</text>
        <dbReference type="Rhea" id="RHEA:42292"/>
        <dbReference type="Rhea" id="RHEA-COMP:9685"/>
        <dbReference type="Rhea" id="RHEA-COMP:14125"/>
        <dbReference type="ChEBI" id="CHEBI:43474"/>
        <dbReference type="ChEBI" id="CHEBI:59918"/>
        <dbReference type="ChEBI" id="CHEBI:64479"/>
        <dbReference type="ChEBI" id="CHEBI:138651"/>
        <dbReference type="EC" id="2.3.1.274"/>
    </reaction>
</comment>
<comment type="pathway">
    <text evidence="1">Lipid metabolism; phospholipid metabolism.</text>
</comment>
<comment type="subunit">
    <text evidence="1">Homodimer. Probably interacts with PlsY.</text>
</comment>
<comment type="subcellular location">
    <subcellularLocation>
        <location evidence="1">Cytoplasm</location>
    </subcellularLocation>
    <text evidence="1">Associated with the membrane possibly through PlsY.</text>
</comment>
<comment type="similarity">
    <text evidence="1">Belongs to the PlsX family.</text>
</comment>
<protein>
    <recommendedName>
        <fullName evidence="1">Phosphate acyltransferase</fullName>
        <ecNumber evidence="1">2.3.1.274</ecNumber>
    </recommendedName>
    <alternativeName>
        <fullName evidence="1">Acyl-ACP phosphotransacylase</fullName>
    </alternativeName>
    <alternativeName>
        <fullName evidence="1">Acyl-[acyl-carrier-protein]--phosphate acyltransferase</fullName>
    </alternativeName>
    <alternativeName>
        <fullName evidence="1">Phosphate-acyl-ACP acyltransferase</fullName>
    </alternativeName>
</protein>
<reference key="1">
    <citation type="journal article" date="2002" name="Nucleic Acids Res.">
        <title>The complete genomic sequence of Mycoplasma penetrans, an intracellular bacterial pathogen in humans.</title>
        <authorList>
            <person name="Sasaki Y."/>
            <person name="Ishikawa J."/>
            <person name="Yamashita A."/>
            <person name="Oshima K."/>
            <person name="Kenri T."/>
            <person name="Furuya K."/>
            <person name="Yoshino C."/>
            <person name="Horino A."/>
            <person name="Shiba T."/>
            <person name="Sasaki T."/>
            <person name="Hattori M."/>
        </authorList>
    </citation>
    <scope>NUCLEOTIDE SEQUENCE [LARGE SCALE GENOMIC DNA]</scope>
    <source>
        <strain>HF-2</strain>
    </source>
</reference>
<name>PLSX_MALP2</name>